<proteinExistence type="inferred from homology"/>
<accession>O79396</accession>
<reference key="1">
    <citation type="journal article" date="1998" name="J. Mol. Evol.">
        <title>The complete mitochondrial genome of Rhea americana and early avian divergences.</title>
        <authorList>
            <person name="Harlid A."/>
            <person name="Janke A."/>
            <person name="Arnason U."/>
        </authorList>
    </citation>
    <scope>NUCLEOTIDE SEQUENCE [GENOMIC DNA]</scope>
</reference>
<reference key="2">
    <citation type="journal article" date="1999" name="Syst. Biol.">
        <title>Interordinal relationships of birds and other reptiles based on whole mitochondrial genomes.</title>
        <authorList>
            <person name="Mindell D.P."/>
            <person name="Sorenson M.D."/>
            <person name="Dimcheff D.E."/>
            <person name="Hasegawa M."/>
            <person name="Ast J.C."/>
            <person name="Yuri T."/>
        </authorList>
    </citation>
    <scope>NUCLEOTIDE SEQUENCE [GENOMIC DNA]</scope>
</reference>
<organism>
    <name type="scientific">Rhea americana</name>
    <name type="common">Greater rhea</name>
    <name type="synonym">Common rhea</name>
    <dbReference type="NCBI Taxonomy" id="8797"/>
    <lineage>
        <taxon>Eukaryota</taxon>
        <taxon>Metazoa</taxon>
        <taxon>Chordata</taxon>
        <taxon>Craniata</taxon>
        <taxon>Vertebrata</taxon>
        <taxon>Euteleostomi</taxon>
        <taxon>Archelosauria</taxon>
        <taxon>Archosauria</taxon>
        <taxon>Dinosauria</taxon>
        <taxon>Saurischia</taxon>
        <taxon>Theropoda</taxon>
        <taxon>Coelurosauria</taxon>
        <taxon>Aves</taxon>
        <taxon>Palaeognathae</taxon>
        <taxon>Rheiformes</taxon>
        <taxon>Rheidae</taxon>
        <taxon>Rhea</taxon>
    </lineage>
</organism>
<sequence>MPQLNPNPWFFIMIMSWAVFLLLIQPKLLSFTHTNLPSNKPLSTPNPTPWTWPWT</sequence>
<geneLocation type="mitochondrion"/>
<keyword id="KW-0066">ATP synthesis</keyword>
<keyword id="KW-0138">CF(0)</keyword>
<keyword id="KW-0375">Hydrogen ion transport</keyword>
<keyword id="KW-0406">Ion transport</keyword>
<keyword id="KW-0472">Membrane</keyword>
<keyword id="KW-0496">Mitochondrion</keyword>
<keyword id="KW-0812">Transmembrane</keyword>
<keyword id="KW-1133">Transmembrane helix</keyword>
<keyword id="KW-0813">Transport</keyword>
<feature type="chain" id="PRO_0000195579" description="ATP synthase F(0) complex subunit 8">
    <location>
        <begin position="1"/>
        <end position="55"/>
    </location>
</feature>
<feature type="transmembrane region" description="Helical" evidence="3">
    <location>
        <begin position="9"/>
        <end position="29"/>
    </location>
</feature>
<protein>
    <recommendedName>
        <fullName evidence="1">ATP synthase F(0) complex subunit 8</fullName>
    </recommendedName>
    <alternativeName>
        <fullName>A6L</fullName>
    </alternativeName>
    <alternativeName>
        <fullName>F-ATPase subunit 8</fullName>
    </alternativeName>
</protein>
<comment type="function">
    <text evidence="1 2">Subunit 8, of the mitochondrial membrane ATP synthase complex (F(1)F(0) ATP synthase or Complex V) that produces ATP from ADP in the presence of a proton gradient across the membrane which is generated by electron transport complexes of the respiratory chain. ATP synthase complex consist of a soluble F(1) head domain - the catalytic core - and a membrane F(1) domain - the membrane proton channel. These two domains are linked by a central stalk rotating inside the F(1) region and a stationary peripheral stalk. During catalysis, ATP synthesis in the catalytic domain of F(1) is coupled via a rotary mechanism of the central stalk subunits to proton translocation (By similarity). In vivo, can only synthesize ATP although its ATP hydrolase activity can be activated artificially in vitro (By similarity). Part of the complex F(0) domain (By similarity).</text>
</comment>
<comment type="subunit">
    <text evidence="1">Component of the ATP synthase complex composed at least of ATP5F1A/subunit alpha, ATP5F1B/subunit beta, ATP5MC1/subunit c (homooctomer), MT-ATP6/subunit a, MT-ATP8/subunit 8, ATP5ME/subunit e, ATP5MF/subunit f, ATP5MG/subunit g, ATP5MK/subunit k, ATP5MJ/subunit j, ATP5F1C/subunit gamma, ATP5F1D/subunit delta, ATP5F1E/subunit epsilon, ATP5PF/subunit F6, ATP5PB/subunit b, ATP5PD/subunit d, ATP5PO/subunit OSCP. ATP synthase complex consists of a soluble F(1) head domain (subunits alpha(3) and beta(3)) - the catalytic core - and a membrane F(0) domain - the membrane proton channel (subunits c, a, 8, e, f, g, k and j). These two domains are linked by a central stalk (subunits gamma, delta, and epsilon) rotating inside the F1 region and a stationary peripheral stalk (subunits F6, b, d, and OSCP).</text>
</comment>
<comment type="subcellular location">
    <subcellularLocation>
        <location>Mitochondrion membrane</location>
        <topology>Single-pass membrane protein</topology>
    </subcellularLocation>
</comment>
<comment type="similarity">
    <text evidence="4">Belongs to the ATPase protein 8 family.</text>
</comment>
<evidence type="ECO:0000250" key="1">
    <source>
        <dbReference type="UniProtKB" id="P03928"/>
    </source>
</evidence>
<evidence type="ECO:0000250" key="2">
    <source>
        <dbReference type="UniProtKB" id="P19483"/>
    </source>
</evidence>
<evidence type="ECO:0000255" key="3"/>
<evidence type="ECO:0000305" key="4"/>
<dbReference type="EMBL" id="Y16884">
    <property type="protein sequence ID" value="CAA76505.1"/>
    <property type="molecule type" value="Genomic_DNA"/>
</dbReference>
<dbReference type="EMBL" id="AF090339">
    <property type="protein sequence ID" value="AAD32506.1"/>
    <property type="molecule type" value="Genomic_DNA"/>
</dbReference>
<dbReference type="PIR" id="T11171">
    <property type="entry name" value="T11171"/>
</dbReference>
<dbReference type="RefSeq" id="NP_007527.1">
    <property type="nucleotide sequence ID" value="NC_000846.1"/>
</dbReference>
<dbReference type="SMR" id="O79396"/>
<dbReference type="GeneID" id="808195"/>
<dbReference type="CTD" id="4509"/>
<dbReference type="GO" id="GO:0031966">
    <property type="term" value="C:mitochondrial membrane"/>
    <property type="evidence" value="ECO:0007669"/>
    <property type="project" value="UniProtKB-SubCell"/>
</dbReference>
<dbReference type="GO" id="GO:0045259">
    <property type="term" value="C:proton-transporting ATP synthase complex"/>
    <property type="evidence" value="ECO:0007669"/>
    <property type="project" value="UniProtKB-KW"/>
</dbReference>
<dbReference type="GO" id="GO:0015078">
    <property type="term" value="F:proton transmembrane transporter activity"/>
    <property type="evidence" value="ECO:0007669"/>
    <property type="project" value="InterPro"/>
</dbReference>
<dbReference type="GO" id="GO:0015986">
    <property type="term" value="P:proton motive force-driven ATP synthesis"/>
    <property type="evidence" value="ECO:0007669"/>
    <property type="project" value="InterPro"/>
</dbReference>
<dbReference type="InterPro" id="IPR001421">
    <property type="entry name" value="ATP8_metazoa"/>
</dbReference>
<dbReference type="InterPro" id="IPR050635">
    <property type="entry name" value="ATPase_protein_8"/>
</dbReference>
<dbReference type="PANTHER" id="PTHR39937">
    <property type="entry name" value="ATP SYNTHASE PROTEIN 8"/>
    <property type="match status" value="1"/>
</dbReference>
<dbReference type="PANTHER" id="PTHR39937:SF1">
    <property type="entry name" value="ATP SYNTHASE PROTEIN 8"/>
    <property type="match status" value="1"/>
</dbReference>
<dbReference type="Pfam" id="PF00895">
    <property type="entry name" value="ATP-synt_8"/>
    <property type="match status" value="1"/>
</dbReference>
<gene>
    <name evidence="1" type="primary">MT-ATP8</name>
    <name type="synonym">ATP8</name>
    <name type="synonym">ATPASE8</name>
    <name type="synonym">MTATP8</name>
</gene>
<name>ATP8_RHEAM</name>